<proteinExistence type="inferred from homology"/>
<gene>
    <name evidence="8" type="primary">REC3</name>
    <name evidence="10" type="ordered locus">At1g15290</name>
    <name evidence="11" type="ORF">F9L1.23</name>
</gene>
<reference key="1">
    <citation type="journal article" date="2000" name="Nature">
        <title>Sequence and analysis of chromosome 1 of the plant Arabidopsis thaliana.</title>
        <authorList>
            <person name="Theologis A."/>
            <person name="Ecker J.R."/>
            <person name="Palm C.J."/>
            <person name="Federspiel N.A."/>
            <person name="Kaul S."/>
            <person name="White O."/>
            <person name="Alonso J."/>
            <person name="Altafi H."/>
            <person name="Araujo R."/>
            <person name="Bowman C.L."/>
            <person name="Brooks S.Y."/>
            <person name="Buehler E."/>
            <person name="Chan A."/>
            <person name="Chao Q."/>
            <person name="Chen H."/>
            <person name="Cheuk R.F."/>
            <person name="Chin C.W."/>
            <person name="Chung M.K."/>
            <person name="Conn L."/>
            <person name="Conway A.B."/>
            <person name="Conway A.R."/>
            <person name="Creasy T.H."/>
            <person name="Dewar K."/>
            <person name="Dunn P."/>
            <person name="Etgu P."/>
            <person name="Feldblyum T.V."/>
            <person name="Feng J.-D."/>
            <person name="Fong B."/>
            <person name="Fujii C.Y."/>
            <person name="Gill J.E."/>
            <person name="Goldsmith A.D."/>
            <person name="Haas B."/>
            <person name="Hansen N.F."/>
            <person name="Hughes B."/>
            <person name="Huizar L."/>
            <person name="Hunter J.L."/>
            <person name="Jenkins J."/>
            <person name="Johnson-Hopson C."/>
            <person name="Khan S."/>
            <person name="Khaykin E."/>
            <person name="Kim C.J."/>
            <person name="Koo H.L."/>
            <person name="Kremenetskaia I."/>
            <person name="Kurtz D.B."/>
            <person name="Kwan A."/>
            <person name="Lam B."/>
            <person name="Langin-Hooper S."/>
            <person name="Lee A."/>
            <person name="Lee J.M."/>
            <person name="Lenz C.A."/>
            <person name="Li J.H."/>
            <person name="Li Y.-P."/>
            <person name="Lin X."/>
            <person name="Liu S.X."/>
            <person name="Liu Z.A."/>
            <person name="Luros J.S."/>
            <person name="Maiti R."/>
            <person name="Marziali A."/>
            <person name="Militscher J."/>
            <person name="Miranda M."/>
            <person name="Nguyen M."/>
            <person name="Nierman W.C."/>
            <person name="Osborne B.I."/>
            <person name="Pai G."/>
            <person name="Peterson J."/>
            <person name="Pham P.K."/>
            <person name="Rizzo M."/>
            <person name="Rooney T."/>
            <person name="Rowley D."/>
            <person name="Sakano H."/>
            <person name="Salzberg S.L."/>
            <person name="Schwartz J.R."/>
            <person name="Shinn P."/>
            <person name="Southwick A.M."/>
            <person name="Sun H."/>
            <person name="Tallon L.J."/>
            <person name="Tambunga G."/>
            <person name="Toriumi M.J."/>
            <person name="Town C.D."/>
            <person name="Utterback T."/>
            <person name="Van Aken S."/>
            <person name="Vaysberg M."/>
            <person name="Vysotskaia V.S."/>
            <person name="Walker M."/>
            <person name="Wu D."/>
            <person name="Yu G."/>
            <person name="Fraser C.M."/>
            <person name="Venter J.C."/>
            <person name="Davis R.W."/>
        </authorList>
    </citation>
    <scope>NUCLEOTIDE SEQUENCE [LARGE SCALE GENOMIC DNA]</scope>
    <source>
        <strain>cv. Columbia</strain>
    </source>
</reference>
<reference key="2">
    <citation type="journal article" date="2017" name="Plant J.">
        <title>Araport11: a complete reannotation of the Arabidopsis thaliana reference genome.</title>
        <authorList>
            <person name="Cheng C.Y."/>
            <person name="Krishnakumar V."/>
            <person name="Chan A.P."/>
            <person name="Thibaud-Nissen F."/>
            <person name="Schobel S."/>
            <person name="Town C.D."/>
        </authorList>
    </citation>
    <scope>GENOME REANNOTATION</scope>
    <source>
        <strain>cv. Columbia</strain>
    </source>
</reference>
<reference key="3">
    <citation type="journal article" date="2016" name="Proc. Natl. Acad. Sci. U.S.A.">
        <title>REDUCED CHLOROPLAST COVERAGE genes from Arabidopsis thaliana help to establish the size of the chloroplast compartment.</title>
        <authorList>
            <person name="Larkin R.M."/>
            <person name="Stefano G."/>
            <person name="Ruckle M.E."/>
            <person name="Stavoe A.K."/>
            <person name="Sinkler C.A."/>
            <person name="Brandizzi F."/>
            <person name="Malmstrom C.M."/>
            <person name="Osteryoung K.W."/>
        </authorList>
    </citation>
    <scope>FUNCTION</scope>
    <scope>DISRUPTION PHENOTYPE</scope>
</reference>
<keyword id="KW-0963">Cytoplasm</keyword>
<keyword id="KW-0539">Nucleus</keyword>
<keyword id="KW-1185">Reference proteome</keyword>
<keyword id="KW-0677">Repeat</keyword>
<keyword id="KW-0802">TPR repeat</keyword>
<organism>
    <name type="scientific">Arabidopsis thaliana</name>
    <name type="common">Mouse-ear cress</name>
    <dbReference type="NCBI Taxonomy" id="3702"/>
    <lineage>
        <taxon>Eukaryota</taxon>
        <taxon>Viridiplantae</taxon>
        <taxon>Streptophyta</taxon>
        <taxon>Embryophyta</taxon>
        <taxon>Tracheophyta</taxon>
        <taxon>Spermatophyta</taxon>
        <taxon>Magnoliopsida</taxon>
        <taxon>eudicotyledons</taxon>
        <taxon>Gunneridae</taxon>
        <taxon>Pentapetalae</taxon>
        <taxon>rosids</taxon>
        <taxon>malvids</taxon>
        <taxon>Brassicales</taxon>
        <taxon>Brassicaceae</taxon>
        <taxon>Camelineae</taxon>
        <taxon>Arabidopsis</taxon>
    </lineage>
</organism>
<accession>F4HZK4</accession>
<accession>Q9XI40</accession>
<protein>
    <recommendedName>
        <fullName evidence="8">Protein REDUCED CHLOROPLAST COVERAGE 3</fullName>
    </recommendedName>
</protein>
<name>REC3_ARATH</name>
<feature type="chain" id="PRO_0000453546" description="Protein REDUCED CHLOROPLAST COVERAGE 3">
    <location>
        <begin position="1"/>
        <end position="1608"/>
    </location>
</feature>
<feature type="domain" description="Clu" evidence="5">
    <location>
        <begin position="288"/>
        <end position="564"/>
    </location>
</feature>
<feature type="repeat" description="TPR 1" evidence="3">
    <location>
        <begin position="848"/>
        <end position="881"/>
    </location>
</feature>
<feature type="repeat" description="TPR 2" evidence="3">
    <location>
        <begin position="890"/>
        <end position="923"/>
    </location>
</feature>
<feature type="repeat" description="TPR 3" evidence="3">
    <location>
        <begin position="932"/>
        <end position="965"/>
    </location>
</feature>
<feature type="repeat" description="TPR 4" evidence="3">
    <location>
        <begin position="974"/>
        <end position="1007"/>
    </location>
</feature>
<feature type="region of interest" description="Disordered" evidence="6">
    <location>
        <begin position="1"/>
        <end position="22"/>
    </location>
</feature>
<feature type="region of interest" description="Disordered" evidence="6">
    <location>
        <begin position="278"/>
        <end position="303"/>
    </location>
</feature>
<feature type="region of interest" description="Disordered" evidence="6">
    <location>
        <begin position="1194"/>
        <end position="1226"/>
    </location>
</feature>
<feature type="region of interest" description="Disordered" evidence="6">
    <location>
        <begin position="1238"/>
        <end position="1292"/>
    </location>
</feature>
<feature type="region of interest" description="Disordered" evidence="6">
    <location>
        <begin position="1369"/>
        <end position="1400"/>
    </location>
</feature>
<feature type="region of interest" description="Disordered" evidence="6">
    <location>
        <begin position="1466"/>
        <end position="1499"/>
    </location>
</feature>
<feature type="region of interest" description="Disordered" evidence="6">
    <location>
        <begin position="1531"/>
        <end position="1552"/>
    </location>
</feature>
<feature type="short sequence motif" description="Nuclear localization signal" evidence="4">
    <location>
        <begin position="1217"/>
        <end position="1224"/>
    </location>
</feature>
<feature type="compositionally biased region" description="Basic residues" evidence="6">
    <location>
        <begin position="1"/>
        <end position="12"/>
    </location>
</feature>
<feature type="compositionally biased region" description="Polar residues" evidence="6">
    <location>
        <begin position="1242"/>
        <end position="1265"/>
    </location>
</feature>
<feature type="compositionally biased region" description="Polar residues" evidence="6">
    <location>
        <begin position="1373"/>
        <end position="1385"/>
    </location>
</feature>
<feature type="compositionally biased region" description="Polar residues" evidence="6">
    <location>
        <begin position="1535"/>
        <end position="1546"/>
    </location>
</feature>
<dbReference type="EMBL" id="AC007591">
    <property type="protein sequence ID" value="AAD39657.1"/>
    <property type="status" value="ALT_SEQ"/>
    <property type="molecule type" value="Genomic_DNA"/>
</dbReference>
<dbReference type="EMBL" id="CP002684">
    <property type="protein sequence ID" value="AEE29300.1"/>
    <property type="molecule type" value="Genomic_DNA"/>
</dbReference>
<dbReference type="PIR" id="B86287">
    <property type="entry name" value="B86287"/>
</dbReference>
<dbReference type="RefSeq" id="NP_172981.3">
    <property type="nucleotide sequence ID" value="NM_101398.5"/>
</dbReference>
<dbReference type="SMR" id="F4HZK4"/>
<dbReference type="FunCoup" id="F4HZK4">
    <property type="interactions" value="1087"/>
</dbReference>
<dbReference type="STRING" id="3702.F4HZK4"/>
<dbReference type="GlyGen" id="F4HZK4">
    <property type="glycosylation" value="1 site"/>
</dbReference>
<dbReference type="iPTMnet" id="F4HZK4"/>
<dbReference type="PaxDb" id="3702-AT1G15290.1"/>
<dbReference type="ProMEX" id="F4HZK4"/>
<dbReference type="ProteomicsDB" id="199369"/>
<dbReference type="EnsemblPlants" id="AT1G15290.1">
    <property type="protein sequence ID" value="AT1G15290.1"/>
    <property type="gene ID" value="AT1G15290"/>
</dbReference>
<dbReference type="GeneID" id="838097"/>
<dbReference type="Gramene" id="AT1G15290.1">
    <property type="protein sequence ID" value="AT1G15290.1"/>
    <property type="gene ID" value="AT1G15290"/>
</dbReference>
<dbReference type="KEGG" id="ath:AT1G15290"/>
<dbReference type="Araport" id="AT1G15290"/>
<dbReference type="TAIR" id="AT1G15290">
    <property type="gene designation" value="REC3"/>
</dbReference>
<dbReference type="eggNOG" id="KOG1839">
    <property type="taxonomic scope" value="Eukaryota"/>
</dbReference>
<dbReference type="HOGENOM" id="CLU_001902_1_1_1"/>
<dbReference type="InParanoid" id="F4HZK4"/>
<dbReference type="PRO" id="PR:F4HZK4"/>
<dbReference type="Proteomes" id="UP000006548">
    <property type="component" value="Chromosome 1"/>
</dbReference>
<dbReference type="ExpressionAtlas" id="F4HZK4">
    <property type="expression patterns" value="baseline and differential"/>
</dbReference>
<dbReference type="GO" id="GO:0005829">
    <property type="term" value="C:cytosol"/>
    <property type="evidence" value="ECO:0007669"/>
    <property type="project" value="UniProtKB-SubCell"/>
</dbReference>
<dbReference type="GO" id="GO:0005576">
    <property type="term" value="C:extracellular region"/>
    <property type="evidence" value="ECO:0007005"/>
    <property type="project" value="TAIR"/>
</dbReference>
<dbReference type="GO" id="GO:0005634">
    <property type="term" value="C:nucleus"/>
    <property type="evidence" value="ECO:0000250"/>
    <property type="project" value="UniProtKB"/>
</dbReference>
<dbReference type="GO" id="GO:0003729">
    <property type="term" value="F:mRNA binding"/>
    <property type="evidence" value="ECO:0000314"/>
    <property type="project" value="TAIR"/>
</dbReference>
<dbReference type="GO" id="GO:0019750">
    <property type="term" value="P:chloroplast localization"/>
    <property type="evidence" value="ECO:0000315"/>
    <property type="project" value="UniProtKB"/>
</dbReference>
<dbReference type="CDD" id="cd15466">
    <property type="entry name" value="CLU-central"/>
    <property type="match status" value="1"/>
</dbReference>
<dbReference type="FunFam" id="1.25.40.10:FF:000024">
    <property type="entry name" value="Tetratricopeptide repeat (TPR)-like superfamily protein"/>
    <property type="match status" value="1"/>
</dbReference>
<dbReference type="Gene3D" id="1.25.40.10">
    <property type="entry name" value="Tetratricopeptide repeat domain"/>
    <property type="match status" value="1"/>
</dbReference>
<dbReference type="InterPro" id="IPR033646">
    <property type="entry name" value="CLU-central"/>
</dbReference>
<dbReference type="InterPro" id="IPR025697">
    <property type="entry name" value="CLU_dom"/>
</dbReference>
<dbReference type="InterPro" id="IPR027523">
    <property type="entry name" value="CLU_prot"/>
</dbReference>
<dbReference type="InterPro" id="IPR011990">
    <property type="entry name" value="TPR-like_helical_dom_sf"/>
</dbReference>
<dbReference type="InterPro" id="IPR019734">
    <property type="entry name" value="TPR_rpt"/>
</dbReference>
<dbReference type="PANTHER" id="PTHR12601">
    <property type="entry name" value="EUKARYOTIC TRANSLATION INITIATION FACTOR 3 SUBUNIT EIF-3"/>
    <property type="match status" value="1"/>
</dbReference>
<dbReference type="PANTHER" id="PTHR12601:SF45">
    <property type="entry name" value="PROTEIN REDUCED CHLOROPLAST COVERAGE 3"/>
    <property type="match status" value="1"/>
</dbReference>
<dbReference type="Pfam" id="PF12807">
    <property type="entry name" value="eIF3_p135"/>
    <property type="match status" value="1"/>
</dbReference>
<dbReference type="Pfam" id="PF13424">
    <property type="entry name" value="TPR_12"/>
    <property type="match status" value="2"/>
</dbReference>
<dbReference type="SMART" id="SM00028">
    <property type="entry name" value="TPR"/>
    <property type="match status" value="3"/>
</dbReference>
<dbReference type="SUPFAM" id="SSF48452">
    <property type="entry name" value="TPR-like"/>
    <property type="match status" value="1"/>
</dbReference>
<dbReference type="PROSITE" id="PS51823">
    <property type="entry name" value="CLU"/>
    <property type="match status" value="1"/>
</dbReference>
<dbReference type="PROSITE" id="PS50005">
    <property type="entry name" value="TPR"/>
    <property type="match status" value="3"/>
</dbReference>
<dbReference type="PROSITE" id="PS50293">
    <property type="entry name" value="TPR_REGION"/>
    <property type="match status" value="1"/>
</dbReference>
<sequence>MAPRSSKGKSNNKGKGGDKKKRDDKLLAPSLVEITVTTPYETQVILKGVSTDKIIDVRRLLASHVETCHFTNYSLSHKVKGHKLNDNIQVLSLKPCFLRMIPEEYLEESQALTQVRRVIDIVACTTRFFSKSPNKSIVAGNANPTPAPDGLDMVAIHTTPKLSQFYEFFSIHHLSPPILHLKKVDGEEAGEKRDGDYFGLKVKICNGKVIHVIASVKGFFAVGKQLSHCHSIVDLLQNVSNAFAKAYESLMKAFTDRNKFGNLPFGLRSNTWLVPSPVSESASPLPTEDEHWGGNGGGQGRNGEYDHRPWAAEFSVLATLPCKTEEERVIRDKKAFLLHSQFIDTSVQRAVRAICNVMDTNQQTSGTTDLPAGSILLEDHVGDLSIVVKRDIASLDSKPEATFQNDAFVLSSEELAERNLLKGITADESVIVHDTPALGKVIVRQCGYTAVVNVKGQTQKAMSDFRDILIDDLPDGGANALNLNSLRVEFHRPHSVGTSVENQPTQLDWDDLESYRCIIQELVKINLTKLEETRVSSVRPIRWELGSTWVQHLQKKETDVCGKPATNDETELSVKGLGKQFKDLKSKSKKSENISAVNEKDTRLHELNEEDDLGQKSIDGLFTELKELLSEEAFSRLKETGTGLHLKSKEELTNMAYGYYDEIALPRLVADFGSLELSPVDGRTLTDFMHIRGLQMRSLGHVAKLAEKLPHIQSLCIHEMITRAFKHLLRAVIASVNNMAELPVAVAASLNFMLGRRELEGCDRIPGEEYCLRLQWLQKFLSRKFGWIQKDEFHHLKKFSILRGLCQKVGLELVSRDFDFDSPNPFMSSDIIGLVPVCKHVLCISSDGRTLLESSKLALDKGKLDDAVSYGTKALVKMIAVCGPYHRNTACAYSLLAVVLYHTGDFNQATIYQQKALDINERELGLDHPDTMKSYGDLSVFYYRLQHFELALKYVNRALFLLHFTCGLSHPNTAATYINVAMMEKEVGNDHLALRYLHEALKSNKRLLGADHIQTAASYHAIAVALSFMEAHSLSVQHEQTTLQILTAKLGADDLRTQDAAAWLEYFESRAIEQQEAGRNGIPKPDASIASKGHLSVSDLLDYISSDPDTKGNVAHRKHRRARILQVNDKVASADDDAHRVASQIDIVTWNNVAEADVTKSRSEVNDPDTVVDKTNIETGDIVVHRLNVDRQTVEESTLDEGWQEAYSKGRSGNGAGRKSRQRQPDLMKKRMLLNKHHNRNQDVQQQNIYSPLQKTSKGPSLSKSSPRRALKNAEIDVSTNTTKPQLKASGAAAVTSTTLASKSLSYKEVALAPPGTVLKPMLEKLELNLERTETQIYRTSSASSGEESKSDTVMLDLPIEGTELHCEKQESQESAESVENLTSESEGDLGSYRGKKTSDISRTKLSASAEPYNPGGFLVIDLQSSAATIGSYPIMVADPISWAVVSCGIHSPPYYSAIHSNGVGTPRSMNPDAPEFVPRRSLQNSSQHAGEDASVSVDSSSCLKAEKDAVDLKKRELASFIVKSSQKEVPAALSKTSPEAESGGTSEKDSAVTEIVYSREEENGANANETNGGEGFVIVAKKRRRKNKVRLTNVAAGLYHQPSSVCA</sequence>
<comment type="function">
    <text evidence="2 7">May act as the scaffold of a protein complex, which sequesters key factors that are required for the G2 to M transition in meristematic tissues (By similarity). Together with REC2, REC3 and FMT/CLU, contributes to the establishment of the cellular volume devoted to the chloroplast compartment (PubMed:26862170).</text>
</comment>
<comment type="subcellular location">
    <subcellularLocation>
        <location evidence="1 4">Nucleus</location>
    </subcellularLocation>
    <subcellularLocation>
        <location evidence="1">Cytoplasm</location>
        <location evidence="1">Cytosol</location>
    </subcellularLocation>
</comment>
<comment type="disruption phenotype">
    <text evidence="7">Reduced proportion of the cellular volume devoted to chloroplasts leading to an abnormal chloroplasts distributions (PubMed:26862170). Lower levels of chlorophyll, especially in plants lacking REC1, REC2, REC3 and FMT/CLU (PubMed:26862170).</text>
</comment>
<comment type="sequence caution" evidence="9">
    <conflict type="erroneous gene model prediction">
        <sequence resource="EMBL-CDS" id="AAD39657"/>
    </conflict>
</comment>
<evidence type="ECO:0000250" key="1">
    <source>
        <dbReference type="UniProtKB" id="F4HS99"/>
    </source>
</evidence>
<evidence type="ECO:0000250" key="2">
    <source>
        <dbReference type="UniProtKB" id="F4JKH6"/>
    </source>
</evidence>
<evidence type="ECO:0000255" key="3"/>
<evidence type="ECO:0000255" key="4">
    <source>
        <dbReference type="PROSITE-ProRule" id="PRU00768"/>
    </source>
</evidence>
<evidence type="ECO:0000255" key="5">
    <source>
        <dbReference type="PROSITE-ProRule" id="PRU01167"/>
    </source>
</evidence>
<evidence type="ECO:0000256" key="6">
    <source>
        <dbReference type="SAM" id="MobiDB-lite"/>
    </source>
</evidence>
<evidence type="ECO:0000269" key="7">
    <source>
    </source>
</evidence>
<evidence type="ECO:0000303" key="8">
    <source>
    </source>
</evidence>
<evidence type="ECO:0000305" key="9"/>
<evidence type="ECO:0000312" key="10">
    <source>
        <dbReference type="Araport" id="AT1G15290"/>
    </source>
</evidence>
<evidence type="ECO:0000312" key="11">
    <source>
        <dbReference type="EMBL" id="AAD39657.1"/>
    </source>
</evidence>